<sequence>MALLLFNDHYYGFLHKYKRHTGSYDNLFNLRCSKEDHYLNSLDAIWLMGCCEEFTDPALRAHALAIATESNIGLVNNNAVISDERLKCWLCKKPSHQQTEHLKLILLPNLVNGFQFATESYHICLKDHSGDDPTQYLSEFSFPTGLRAYYKPHQKMEHKHIVVTNGIPISKNFNEIALPDPSPSDDYVLVGAHECPILM</sequence>
<name>P2_RSVT</name>
<keyword id="KW-1035">Host cytoplasm</keyword>
<keyword id="KW-1185">Reference proteome</keyword>
<gene>
    <name type="ORF">p2</name>
</gene>
<accession>Q89717</accession>
<feature type="chain" id="PRO_0000403930" description="Protein p2">
    <location>
        <begin position="1"/>
        <end position="199"/>
    </location>
</feature>
<reference key="1">
    <citation type="journal article" date="1993" name="J. Gen. Virol.">
        <title>Nucleotide sequence and possible ambisense coding strategy of rice stripe virus RNA segment 2.</title>
        <authorList>
            <person name="Takahashi M."/>
            <person name="Toriyama S."/>
            <person name="Hamamatsu C."/>
            <person name="Ishihama A."/>
        </authorList>
    </citation>
    <scope>NUCLEOTIDE SEQUENCE [GENOMIC RNA]</scope>
</reference>
<reference key="2">
    <citation type="journal article" date="2007" name="Arch. Virol.">
        <title>Genomic analysis of rice stripe virus Zhejiang isolate shows the presence of an OTU-like domain in the RNA1 protein and a novel sequence motif conserved within the intergenic regions of ambisense segments of tenuiviruses.</title>
        <authorList>
            <person name="Zhang H.-M."/>
            <person name="Yang J."/>
            <person name="Sun H.-R."/>
            <person name="Xin X."/>
            <person name="Wang H.-D."/>
            <person name="Chen J.-P."/>
            <person name="Adams M.J."/>
        </authorList>
    </citation>
    <scope>NUCLEOTIDE SEQUENCE [GENOMIC RNA]</scope>
    <source>
        <strain>Zhejiang</strain>
    </source>
</reference>
<reference key="3">
    <citation type="submission" date="2009-05" db="EMBL/GenBank/DDBJ databases">
        <title>Sequence and phylogenetic analyses of the complete sequence of RNA1 and RNA2 segments of Korean Rice stripe virus isolates and with those reported isolates from China and Japan.</title>
        <authorList>
            <person name="Jonson G.-M."/>
            <person name="Kim K.-H."/>
            <person name="Choi H.-S."/>
            <person name="Kim J.-S."/>
            <person name="Choi I.-R."/>
        </authorList>
    </citation>
    <scope>NUCLEOTIDE SEQUENCE [GENOMIC RNA]</scope>
    <source>
        <strain>JD-JN</strain>
    </source>
</reference>
<reference key="4">
    <citation type="journal article" date="2005" name="Virus Genes">
        <title>Detection and localization of Rice stripe virus gene products in vivo.</title>
        <authorList>
            <person name="Liang D."/>
            <person name="Qu Z."/>
            <person name="Ma X."/>
            <person name="Hull R."/>
        </authorList>
    </citation>
    <scope>SUBCELLULAR LOCATION</scope>
</reference>
<evidence type="ECO:0000269" key="1">
    <source>
    </source>
</evidence>
<comment type="subcellular location">
    <subcellularLocation>
        <location evidence="1">Host cytoplasm</location>
    </subcellularLocation>
</comment>
<organismHost>
    <name type="scientific">Avena sativa</name>
    <name type="common">Oat</name>
    <dbReference type="NCBI Taxonomy" id="4498"/>
</organismHost>
<organismHost>
    <name type="scientific">Digitaria</name>
    <dbReference type="NCBI Taxonomy" id="66017"/>
</organismHost>
<organismHost>
    <name type="scientific">Eragrostis</name>
    <dbReference type="NCBI Taxonomy" id="38413"/>
</organismHost>
<organismHost>
    <name type="scientific">Hordeum vulgare</name>
    <name type="common">Barley</name>
    <dbReference type="NCBI Taxonomy" id="4513"/>
</organismHost>
<organismHost>
    <name type="scientific">Oryza sativa</name>
    <name type="common">Rice</name>
    <dbReference type="NCBI Taxonomy" id="4530"/>
</organismHost>
<organismHost>
    <name type="scientific">Setaria italica</name>
    <name type="common">Foxtail millet</name>
    <name type="synonym">Panicum italicum</name>
    <dbReference type="NCBI Taxonomy" id="4555"/>
</organismHost>
<organismHost>
    <name type="scientific">Setaria viridis</name>
    <name type="common">Green bristlegrass</name>
    <name type="synonym">Setaria italica subsp. viridis</name>
    <dbReference type="NCBI Taxonomy" id="4556"/>
</organismHost>
<organismHost>
    <name type="scientific">Triticum aestivum</name>
    <name type="common">Wheat</name>
    <dbReference type="NCBI Taxonomy" id="4565"/>
</organismHost>
<organismHost>
    <name type="scientific">Zea mays</name>
    <name type="common">Maize</name>
    <dbReference type="NCBI Taxonomy" id="4577"/>
</organismHost>
<dbReference type="EMBL" id="AY284845">
    <property type="protein sequence ID" value="AAP40277.1"/>
    <property type="molecule type" value="Genomic_RNA"/>
</dbReference>
<dbReference type="EMBL" id="AY284851">
    <property type="protein sequence ID" value="AAP40282.1"/>
    <property type="molecule type" value="Genomic_RNA"/>
</dbReference>
<dbReference type="EMBL" id="AY597407">
    <property type="protein sequence ID" value="AAT06562.1"/>
    <property type="molecule type" value="Genomic_RNA"/>
</dbReference>
<dbReference type="EMBL" id="AY597411">
    <property type="protein sequence ID" value="AAT06566.1"/>
    <property type="molecule type" value="Genomic_RNA"/>
</dbReference>
<dbReference type="EMBL" id="AY973286">
    <property type="protein sequence ID" value="AAX85933.1"/>
    <property type="molecule type" value="Genomic_RNA"/>
</dbReference>
<dbReference type="EMBL" id="DQ333943">
    <property type="protein sequence ID" value="ABC68334.1"/>
    <property type="molecule type" value="Genomic_RNA"/>
</dbReference>
<dbReference type="EMBL" id="EF141328">
    <property type="protein sequence ID" value="ABM55681.1"/>
    <property type="molecule type" value="Genomic_RNA"/>
</dbReference>
<dbReference type="EMBL" id="EF198704">
    <property type="protein sequence ID" value="ABQ02647.1"/>
    <property type="molecule type" value="Genomic_RNA"/>
</dbReference>
<dbReference type="EMBL" id="EF198705">
    <property type="protein sequence ID" value="ABQ02648.1"/>
    <property type="molecule type" value="Genomic_RNA"/>
</dbReference>
<dbReference type="EMBL" id="EF198714">
    <property type="protein sequence ID" value="ABQ02657.1"/>
    <property type="molecule type" value="Genomic_RNA"/>
</dbReference>
<dbReference type="EMBL" id="EF493228">
    <property type="protein sequence ID" value="ABS50110.1"/>
    <property type="molecule type" value="Genomic_RNA"/>
</dbReference>
<dbReference type="EMBL" id="GQ229106">
    <property type="protein sequence ID" value="ADE60720.1"/>
    <property type="molecule type" value="Genomic_RNA"/>
</dbReference>
<dbReference type="EMBL" id="D13176">
    <property type="protein sequence ID" value="BAA02469.1"/>
    <property type="molecule type" value="Genomic_RNA"/>
</dbReference>
<dbReference type="EMBL" id="D13787">
    <property type="protein sequence ID" value="BAA02934.1"/>
    <property type="molecule type" value="Genomic_RNA"/>
</dbReference>
<dbReference type="PIR" id="JQ1964">
    <property type="entry name" value="JQ1964"/>
</dbReference>
<dbReference type="KEGG" id="vg:962683"/>
<dbReference type="Proteomes" id="UP000006677">
    <property type="component" value="Genome"/>
</dbReference>
<dbReference type="GO" id="GO:0030430">
    <property type="term" value="C:host cell cytoplasm"/>
    <property type="evidence" value="ECO:0007669"/>
    <property type="project" value="UniProtKB-SubCell"/>
</dbReference>
<dbReference type="InterPro" id="IPR007974">
    <property type="entry name" value="Tenui_movmnt_prot"/>
</dbReference>
<dbReference type="Pfam" id="PF05310">
    <property type="entry name" value="Tenui_NS3"/>
    <property type="match status" value="1"/>
</dbReference>
<protein>
    <recommendedName>
        <fullName>Protein p2</fullName>
    </recommendedName>
</protein>
<organism>
    <name type="scientific">Rice stripe virus (isolate T)</name>
    <name type="common">RSV</name>
    <dbReference type="NCBI Taxonomy" id="36394"/>
    <lineage>
        <taxon>Viruses</taxon>
        <taxon>Riboviria</taxon>
        <taxon>Orthornavirae</taxon>
        <taxon>Negarnaviricota</taxon>
        <taxon>Polyploviricotina</taxon>
        <taxon>Ellioviricetes</taxon>
        <taxon>Bunyavirales</taxon>
        <taxon>Phenuiviridae</taxon>
        <taxon>Tenuivirus</taxon>
        <taxon>Tenuivirus oryzaclavatae</taxon>
    </lineage>
</organism>
<proteinExistence type="predicted"/>